<accession>B2KB84</accession>
<proteinExistence type="inferred from homology"/>
<comment type="similarity">
    <text evidence="1">Belongs to the bacterial ribosomal protein bL35 family.</text>
</comment>
<evidence type="ECO:0000255" key="1">
    <source>
        <dbReference type="HAMAP-Rule" id="MF_00514"/>
    </source>
</evidence>
<evidence type="ECO:0000256" key="2">
    <source>
        <dbReference type="SAM" id="MobiDB-lite"/>
    </source>
</evidence>
<evidence type="ECO:0000305" key="3"/>
<feature type="chain" id="PRO_1000127351" description="Large ribosomal subunit protein bL35">
    <location>
        <begin position="1"/>
        <end position="67"/>
    </location>
</feature>
<feature type="region of interest" description="Disordered" evidence="2">
    <location>
        <begin position="1"/>
        <end position="54"/>
    </location>
</feature>
<feature type="compositionally biased region" description="Basic residues" evidence="2">
    <location>
        <begin position="1"/>
        <end position="32"/>
    </location>
</feature>
<protein>
    <recommendedName>
        <fullName evidence="1">Large ribosomal subunit protein bL35</fullName>
    </recommendedName>
    <alternativeName>
        <fullName evidence="3">50S ribosomal protein L35</fullName>
    </alternativeName>
</protein>
<sequence>MPKLKNHSGAKKRFAKTATGKYKRRKAGRKHLLTPQSGSRKREMRQTGIIKPESAEGKLLKKYLPMD</sequence>
<gene>
    <name evidence="1" type="primary">rpmI</name>
    <name type="ordered locus">Emin_0347</name>
</gene>
<name>RL35_ELUMP</name>
<reference key="1">
    <citation type="journal article" date="2009" name="Appl. Environ. Microbiol.">
        <title>Genomic analysis of 'Elusimicrobium minutum,' the first cultivated representative of the phylum 'Elusimicrobia' (formerly termite group 1).</title>
        <authorList>
            <person name="Herlemann D.P.R."/>
            <person name="Geissinger O."/>
            <person name="Ikeda-Ohtsubo W."/>
            <person name="Kunin V."/>
            <person name="Sun H."/>
            <person name="Lapidus A."/>
            <person name="Hugenholtz P."/>
            <person name="Brune A."/>
        </authorList>
    </citation>
    <scope>NUCLEOTIDE SEQUENCE [LARGE SCALE GENOMIC DNA]</scope>
    <source>
        <strain>Pei191</strain>
    </source>
</reference>
<dbReference type="EMBL" id="CP001055">
    <property type="protein sequence ID" value="ACC97906.1"/>
    <property type="molecule type" value="Genomic_DNA"/>
</dbReference>
<dbReference type="RefSeq" id="WP_012414521.1">
    <property type="nucleotide sequence ID" value="NC_010644.1"/>
</dbReference>
<dbReference type="SMR" id="B2KB84"/>
<dbReference type="STRING" id="445932.Emin_0347"/>
<dbReference type="KEGG" id="emi:Emin_0347"/>
<dbReference type="HOGENOM" id="CLU_169643_4_2_0"/>
<dbReference type="OrthoDB" id="47476at2"/>
<dbReference type="Proteomes" id="UP000001029">
    <property type="component" value="Chromosome"/>
</dbReference>
<dbReference type="GO" id="GO:0015934">
    <property type="term" value="C:large ribosomal subunit"/>
    <property type="evidence" value="ECO:0007669"/>
    <property type="project" value="TreeGrafter"/>
</dbReference>
<dbReference type="GO" id="GO:0003735">
    <property type="term" value="F:structural constituent of ribosome"/>
    <property type="evidence" value="ECO:0007669"/>
    <property type="project" value="InterPro"/>
</dbReference>
<dbReference type="GO" id="GO:0006412">
    <property type="term" value="P:translation"/>
    <property type="evidence" value="ECO:0007669"/>
    <property type="project" value="UniProtKB-UniRule"/>
</dbReference>
<dbReference type="FunFam" id="4.10.410.60:FF:000001">
    <property type="entry name" value="50S ribosomal protein L35"/>
    <property type="match status" value="1"/>
</dbReference>
<dbReference type="Gene3D" id="4.10.410.60">
    <property type="match status" value="1"/>
</dbReference>
<dbReference type="HAMAP" id="MF_00514">
    <property type="entry name" value="Ribosomal_bL35"/>
    <property type="match status" value="1"/>
</dbReference>
<dbReference type="InterPro" id="IPR001706">
    <property type="entry name" value="Ribosomal_bL35"/>
</dbReference>
<dbReference type="InterPro" id="IPR021137">
    <property type="entry name" value="Ribosomal_bL35-like"/>
</dbReference>
<dbReference type="InterPro" id="IPR018265">
    <property type="entry name" value="Ribosomal_bL35_CS"/>
</dbReference>
<dbReference type="InterPro" id="IPR037229">
    <property type="entry name" value="Ribosomal_bL35_sf"/>
</dbReference>
<dbReference type="NCBIfam" id="TIGR00001">
    <property type="entry name" value="rpmI_bact"/>
    <property type="match status" value="1"/>
</dbReference>
<dbReference type="PANTHER" id="PTHR33343">
    <property type="entry name" value="54S RIBOSOMAL PROTEIN BL35M"/>
    <property type="match status" value="1"/>
</dbReference>
<dbReference type="PANTHER" id="PTHR33343:SF1">
    <property type="entry name" value="LARGE RIBOSOMAL SUBUNIT PROTEIN BL35M"/>
    <property type="match status" value="1"/>
</dbReference>
<dbReference type="Pfam" id="PF01632">
    <property type="entry name" value="Ribosomal_L35p"/>
    <property type="match status" value="1"/>
</dbReference>
<dbReference type="PRINTS" id="PR00064">
    <property type="entry name" value="RIBOSOMALL35"/>
</dbReference>
<dbReference type="SUPFAM" id="SSF143034">
    <property type="entry name" value="L35p-like"/>
    <property type="match status" value="1"/>
</dbReference>
<dbReference type="PROSITE" id="PS00936">
    <property type="entry name" value="RIBOSOMAL_L35"/>
    <property type="match status" value="1"/>
</dbReference>
<organism>
    <name type="scientific">Elusimicrobium minutum (strain Pei191)</name>
    <dbReference type="NCBI Taxonomy" id="445932"/>
    <lineage>
        <taxon>Bacteria</taxon>
        <taxon>Pseudomonadati</taxon>
        <taxon>Elusimicrobiota</taxon>
        <taxon>Elusimicrobia</taxon>
        <taxon>Elusimicrobiales</taxon>
        <taxon>Elusimicrobiaceae</taxon>
        <taxon>Elusimicrobium</taxon>
    </lineage>
</organism>
<keyword id="KW-1185">Reference proteome</keyword>
<keyword id="KW-0687">Ribonucleoprotein</keyword>
<keyword id="KW-0689">Ribosomal protein</keyword>